<dbReference type="EC" id="3.1.3.-" evidence="20"/>
<dbReference type="EMBL" id="U09237">
    <property type="protein sequence ID" value="AAA79037.1"/>
    <property type="molecule type" value="mRNA"/>
</dbReference>
<dbReference type="PIR" id="S68983">
    <property type="entry name" value="S68983"/>
</dbReference>
<dbReference type="RefSeq" id="NP_777261.1">
    <property type="nucleotide sequence ID" value="NM_174836.2"/>
</dbReference>
<dbReference type="PDB" id="1N4C">
    <property type="method" value="NMR"/>
    <property type="chains" value="A=737-910"/>
</dbReference>
<dbReference type="PDB" id="1NZ6">
    <property type="method" value="X-ray"/>
    <property type="resolution" value="2.50 A"/>
    <property type="chains" value="A/B=810-910"/>
</dbReference>
<dbReference type="PDB" id="1XI5">
    <property type="method" value="EM"/>
    <property type="resolution" value="12.00 A"/>
    <property type="chains" value="J/K/L/M/N/O/P/Q/R=797-910"/>
</dbReference>
<dbReference type="PDB" id="2QWN">
    <property type="method" value="X-ray"/>
    <property type="resolution" value="2.40 A"/>
    <property type="chains" value="B=812-905"/>
</dbReference>
<dbReference type="PDB" id="2QWO">
    <property type="method" value="X-ray"/>
    <property type="resolution" value="1.70 A"/>
    <property type="chains" value="B=813-904"/>
</dbReference>
<dbReference type="PDB" id="2QWP">
    <property type="method" value="X-ray"/>
    <property type="resolution" value="1.75 A"/>
    <property type="chains" value="B=813-904"/>
</dbReference>
<dbReference type="PDB" id="2QWQ">
    <property type="method" value="X-ray"/>
    <property type="resolution" value="2.21 A"/>
    <property type="chains" value="B=813-904"/>
</dbReference>
<dbReference type="PDB" id="2QWR">
    <property type="method" value="X-ray"/>
    <property type="resolution" value="2.21 A"/>
    <property type="chains" value="B=813-904"/>
</dbReference>
<dbReference type="PDB" id="3N0A">
    <property type="method" value="X-ray"/>
    <property type="resolution" value="2.20 A"/>
    <property type="chains" value="A=40-400"/>
</dbReference>
<dbReference type="PDBsum" id="1N4C"/>
<dbReference type="PDBsum" id="1NZ6"/>
<dbReference type="PDBsum" id="1XI5"/>
<dbReference type="PDBsum" id="2QWN"/>
<dbReference type="PDBsum" id="2QWO"/>
<dbReference type="PDBsum" id="2QWP"/>
<dbReference type="PDBsum" id="2QWQ"/>
<dbReference type="PDBsum" id="2QWR"/>
<dbReference type="PDBsum" id="3N0A"/>
<dbReference type="BMRB" id="Q27974"/>
<dbReference type="EMDB" id="EMD-3442"/>
<dbReference type="EMDB" id="EMD-4035"/>
<dbReference type="EMDB" id="EMD-4036"/>
<dbReference type="SMR" id="Q27974"/>
<dbReference type="DIP" id="DIP-41952N"/>
<dbReference type="ELM" id="Q27974"/>
<dbReference type="FunCoup" id="Q27974">
    <property type="interactions" value="1574"/>
</dbReference>
<dbReference type="IntAct" id="Q27974">
    <property type="interactions" value="1"/>
</dbReference>
<dbReference type="MINT" id="Q27974"/>
<dbReference type="STRING" id="9913.ENSBTAP00000071020"/>
<dbReference type="PaxDb" id="9913-ENSBTAP00000041032"/>
<dbReference type="GeneID" id="317659"/>
<dbReference type="KEGG" id="bta:317659"/>
<dbReference type="CTD" id="9829"/>
<dbReference type="eggNOG" id="KOG0431">
    <property type="taxonomic scope" value="Eukaryota"/>
</dbReference>
<dbReference type="eggNOG" id="KOG2283">
    <property type="taxonomic scope" value="Eukaryota"/>
</dbReference>
<dbReference type="InParanoid" id="Q27974"/>
<dbReference type="OrthoDB" id="1717591at2759"/>
<dbReference type="EvolutionaryTrace" id="Q27974"/>
<dbReference type="Proteomes" id="UP000009136">
    <property type="component" value="Unplaced"/>
</dbReference>
<dbReference type="GO" id="GO:0030136">
    <property type="term" value="C:clathrin-coated vesicle"/>
    <property type="evidence" value="ECO:0000314"/>
    <property type="project" value="UniProtKB"/>
</dbReference>
<dbReference type="GO" id="GO:0043231">
    <property type="term" value="C:intracellular membrane-bounded organelle"/>
    <property type="evidence" value="ECO:0000318"/>
    <property type="project" value="GO_Central"/>
</dbReference>
<dbReference type="GO" id="GO:0014069">
    <property type="term" value="C:postsynaptic density"/>
    <property type="evidence" value="ECO:0000318"/>
    <property type="project" value="GO_Central"/>
</dbReference>
<dbReference type="GO" id="GO:0098793">
    <property type="term" value="C:presynapse"/>
    <property type="evidence" value="ECO:0007669"/>
    <property type="project" value="GOC"/>
</dbReference>
<dbReference type="GO" id="GO:0031982">
    <property type="term" value="C:vesicle"/>
    <property type="evidence" value="ECO:0000318"/>
    <property type="project" value="GO_Central"/>
</dbReference>
<dbReference type="GO" id="GO:0030276">
    <property type="term" value="F:clathrin binding"/>
    <property type="evidence" value="ECO:0000314"/>
    <property type="project" value="UniProtKB"/>
</dbReference>
<dbReference type="GO" id="GO:0032050">
    <property type="term" value="F:clathrin heavy chain binding"/>
    <property type="evidence" value="ECO:0000314"/>
    <property type="project" value="UniProtKB"/>
</dbReference>
<dbReference type="GO" id="GO:0031072">
    <property type="term" value="F:heat shock protein binding"/>
    <property type="evidence" value="ECO:0000314"/>
    <property type="project" value="UniProtKB"/>
</dbReference>
<dbReference type="GO" id="GO:0060090">
    <property type="term" value="F:molecular adaptor activity"/>
    <property type="evidence" value="ECO:0000269"/>
    <property type="project" value="DisProt"/>
</dbReference>
<dbReference type="GO" id="GO:0019904">
    <property type="term" value="F:protein domain specific binding"/>
    <property type="evidence" value="ECO:0000353"/>
    <property type="project" value="CAFA"/>
</dbReference>
<dbReference type="GO" id="GO:0004725">
    <property type="term" value="F:protein tyrosine phosphatase activity"/>
    <property type="evidence" value="ECO:0007669"/>
    <property type="project" value="UniProtKB-EC"/>
</dbReference>
<dbReference type="GO" id="GO:0017124">
    <property type="term" value="F:SH3 domain binding"/>
    <property type="evidence" value="ECO:0007669"/>
    <property type="project" value="UniProtKB-KW"/>
</dbReference>
<dbReference type="GO" id="GO:0072318">
    <property type="term" value="P:clathrin coat disassembly"/>
    <property type="evidence" value="ECO:0000314"/>
    <property type="project" value="UniProtKB"/>
</dbReference>
<dbReference type="GO" id="GO:0072583">
    <property type="term" value="P:clathrin-dependent endocytosis"/>
    <property type="evidence" value="ECO:0000315"/>
    <property type="project" value="UniProtKB"/>
</dbReference>
<dbReference type="GO" id="GO:0046907">
    <property type="term" value="P:intracellular transport"/>
    <property type="evidence" value="ECO:0000250"/>
    <property type="project" value="UniProtKB"/>
</dbReference>
<dbReference type="GO" id="GO:1905443">
    <property type="term" value="P:regulation of clathrin coat assembly"/>
    <property type="evidence" value="ECO:0000250"/>
    <property type="project" value="UniProtKB"/>
</dbReference>
<dbReference type="GO" id="GO:0036465">
    <property type="term" value="P:synaptic vesicle recycling"/>
    <property type="evidence" value="ECO:0000250"/>
    <property type="project" value="UniProtKB"/>
</dbReference>
<dbReference type="GO" id="GO:0016191">
    <property type="term" value="P:synaptic vesicle uncoating"/>
    <property type="evidence" value="ECO:0000318"/>
    <property type="project" value="GO_Central"/>
</dbReference>
<dbReference type="CDD" id="cd06257">
    <property type="entry name" value="DnaJ"/>
    <property type="match status" value="1"/>
</dbReference>
<dbReference type="CDD" id="cd14563">
    <property type="entry name" value="PTP_auxilin_N"/>
    <property type="match status" value="1"/>
</dbReference>
<dbReference type="DisProt" id="DP00351"/>
<dbReference type="FunFam" id="2.60.40.1110:FF:000001">
    <property type="entry name" value="cyclin-G-associated kinase isoform X2"/>
    <property type="match status" value="1"/>
</dbReference>
<dbReference type="FunFam" id="3.90.190.10:FF:000255">
    <property type="entry name" value="putative tyrosine-protein phosphatase auxilin"/>
    <property type="match status" value="1"/>
</dbReference>
<dbReference type="FunFam" id="1.10.287.110:FF:000002">
    <property type="entry name" value="putative tyrosine-protein phosphatase auxilin isoform X2"/>
    <property type="match status" value="1"/>
</dbReference>
<dbReference type="Gene3D" id="2.60.40.1110">
    <property type="match status" value="1"/>
</dbReference>
<dbReference type="Gene3D" id="1.10.287.110">
    <property type="entry name" value="DnaJ domain"/>
    <property type="match status" value="1"/>
</dbReference>
<dbReference type="Gene3D" id="3.90.190.10">
    <property type="entry name" value="Protein tyrosine phosphatase superfamily"/>
    <property type="match status" value="1"/>
</dbReference>
<dbReference type="InterPro" id="IPR035892">
    <property type="entry name" value="C2_domain_sf"/>
</dbReference>
<dbReference type="InterPro" id="IPR001623">
    <property type="entry name" value="DnaJ_domain"/>
</dbReference>
<dbReference type="InterPro" id="IPR036869">
    <property type="entry name" value="J_dom_sf"/>
</dbReference>
<dbReference type="InterPro" id="IPR029021">
    <property type="entry name" value="Prot-tyrosine_phosphatase-like"/>
</dbReference>
<dbReference type="InterPro" id="IPR014020">
    <property type="entry name" value="Tensin_C2-dom"/>
</dbReference>
<dbReference type="InterPro" id="IPR029023">
    <property type="entry name" value="Tensin_phosphatase"/>
</dbReference>
<dbReference type="InterPro" id="IPR000387">
    <property type="entry name" value="Tyr_Pase_dom"/>
</dbReference>
<dbReference type="PANTHER" id="PTHR23172">
    <property type="entry name" value="AUXILIN/CYCLIN G-ASSOCIATED KINASE-RELATED"/>
    <property type="match status" value="1"/>
</dbReference>
<dbReference type="PANTHER" id="PTHR23172:SF4">
    <property type="entry name" value="TYROSINE-PROTEIN PHOSPHATASE AUXILIN-RELATED"/>
    <property type="match status" value="1"/>
</dbReference>
<dbReference type="Pfam" id="PF10409">
    <property type="entry name" value="PTEN_C2"/>
    <property type="match status" value="1"/>
</dbReference>
<dbReference type="SMART" id="SM00271">
    <property type="entry name" value="DnaJ"/>
    <property type="match status" value="1"/>
</dbReference>
<dbReference type="SMART" id="SM01326">
    <property type="entry name" value="PTEN_C2"/>
    <property type="match status" value="1"/>
</dbReference>
<dbReference type="SUPFAM" id="SSF52799">
    <property type="entry name" value="(Phosphotyrosine protein) phosphatases II"/>
    <property type="match status" value="1"/>
</dbReference>
<dbReference type="SUPFAM" id="SSF49562">
    <property type="entry name" value="C2 domain (Calcium/lipid-binding domain, CaLB)"/>
    <property type="match status" value="1"/>
</dbReference>
<dbReference type="SUPFAM" id="SSF46565">
    <property type="entry name" value="Chaperone J-domain"/>
    <property type="match status" value="1"/>
</dbReference>
<dbReference type="PROSITE" id="PS51182">
    <property type="entry name" value="C2_TENSIN"/>
    <property type="match status" value="1"/>
</dbReference>
<dbReference type="PROSITE" id="PS50076">
    <property type="entry name" value="DNAJ_2"/>
    <property type="match status" value="1"/>
</dbReference>
<dbReference type="PROSITE" id="PS51181">
    <property type="entry name" value="PPASE_TENSIN"/>
    <property type="match status" value="1"/>
</dbReference>
<dbReference type="PROSITE" id="PS50056">
    <property type="entry name" value="TYR_PHOSPHATASE_2"/>
    <property type="match status" value="1"/>
</dbReference>
<evidence type="ECO:0000250" key="1">
    <source>
        <dbReference type="UniProtKB" id="O75061"/>
    </source>
</evidence>
<evidence type="ECO:0000250" key="2">
    <source>
        <dbReference type="UniProtKB" id="Q80TZ3"/>
    </source>
</evidence>
<evidence type="ECO:0000255" key="3"/>
<evidence type="ECO:0000255" key="4">
    <source>
        <dbReference type="PROSITE-ProRule" id="PRU00286"/>
    </source>
</evidence>
<evidence type="ECO:0000255" key="5">
    <source>
        <dbReference type="PROSITE-ProRule" id="PRU00589"/>
    </source>
</evidence>
<evidence type="ECO:0000255" key="6">
    <source>
        <dbReference type="PROSITE-ProRule" id="PRU00590"/>
    </source>
</evidence>
<evidence type="ECO:0000256" key="7">
    <source>
        <dbReference type="SAM" id="MobiDB-lite"/>
    </source>
</evidence>
<evidence type="ECO:0000269" key="8">
    <source>
    </source>
</evidence>
<evidence type="ECO:0000269" key="9">
    <source>
    </source>
</evidence>
<evidence type="ECO:0000269" key="10">
    <source>
    </source>
</evidence>
<evidence type="ECO:0000269" key="11">
    <source>
    </source>
</evidence>
<evidence type="ECO:0000269" key="12">
    <source>
    </source>
</evidence>
<evidence type="ECO:0000269" key="13">
    <source>
    </source>
</evidence>
<evidence type="ECO:0000269" key="14">
    <source>
    </source>
</evidence>
<evidence type="ECO:0000269" key="15">
    <source>
    </source>
</evidence>
<evidence type="ECO:0000269" key="16">
    <source>
    </source>
</evidence>
<evidence type="ECO:0000269" key="17">
    <source>
    </source>
</evidence>
<evidence type="ECO:0000269" key="18">
    <source>
    </source>
</evidence>
<evidence type="ECO:0000303" key="19">
    <source>
    </source>
</evidence>
<evidence type="ECO:0000305" key="20"/>
<evidence type="ECO:0007744" key="21">
    <source>
        <dbReference type="PDB" id="1N4C"/>
    </source>
</evidence>
<evidence type="ECO:0007744" key="22">
    <source>
        <dbReference type="PDB" id="1NZ6"/>
    </source>
</evidence>
<evidence type="ECO:0007744" key="23">
    <source>
        <dbReference type="PDB" id="1XI5"/>
    </source>
</evidence>
<evidence type="ECO:0007744" key="24">
    <source>
        <dbReference type="PDB" id="2QWN"/>
    </source>
</evidence>
<evidence type="ECO:0007744" key="25">
    <source>
        <dbReference type="PDB" id="2QWO"/>
    </source>
</evidence>
<evidence type="ECO:0007744" key="26">
    <source>
        <dbReference type="PDB" id="2QWP"/>
    </source>
</evidence>
<evidence type="ECO:0007744" key="27">
    <source>
        <dbReference type="PDB" id="2QWQ"/>
    </source>
</evidence>
<evidence type="ECO:0007744" key="28">
    <source>
        <dbReference type="PDB" id="2QWR"/>
    </source>
</evidence>
<evidence type="ECO:0007744" key="29">
    <source>
        <dbReference type="PDB" id="3N0A"/>
    </source>
</evidence>
<evidence type="ECO:0007829" key="30">
    <source>
        <dbReference type="PDB" id="1N4C"/>
    </source>
</evidence>
<evidence type="ECO:0007829" key="31">
    <source>
        <dbReference type="PDB" id="2QWO"/>
    </source>
</evidence>
<evidence type="ECO:0007829" key="32">
    <source>
        <dbReference type="PDB" id="3N0A"/>
    </source>
</evidence>
<organism>
    <name type="scientific">Bos taurus</name>
    <name type="common">Bovine</name>
    <dbReference type="NCBI Taxonomy" id="9913"/>
    <lineage>
        <taxon>Eukaryota</taxon>
        <taxon>Metazoa</taxon>
        <taxon>Chordata</taxon>
        <taxon>Craniata</taxon>
        <taxon>Vertebrata</taxon>
        <taxon>Euteleostomi</taxon>
        <taxon>Mammalia</taxon>
        <taxon>Eutheria</taxon>
        <taxon>Laurasiatheria</taxon>
        <taxon>Artiodactyla</taxon>
        <taxon>Ruminantia</taxon>
        <taxon>Pecora</taxon>
        <taxon>Bovidae</taxon>
        <taxon>Bovinae</taxon>
        <taxon>Bos</taxon>
    </lineage>
</organism>
<keyword id="KW-0002">3D-structure</keyword>
<keyword id="KW-0143">Chaperone</keyword>
<keyword id="KW-0968">Cytoplasmic vesicle</keyword>
<keyword id="KW-0903">Direct protein sequencing</keyword>
<keyword id="KW-0378">Hydrolase</keyword>
<keyword id="KW-0597">Phosphoprotein</keyword>
<keyword id="KW-0904">Protein phosphatase</keyword>
<keyword id="KW-1185">Reference proteome</keyword>
<keyword id="KW-0677">Repeat</keyword>
<keyword id="KW-0729">SH3-binding</keyword>
<gene>
    <name evidence="1" type="primary">DNAJC6</name>
</gene>
<proteinExistence type="evidence at protein level"/>
<accession>Q27974</accession>
<reference key="1">
    <citation type="journal article" date="1995" name="Eur. J. Biochem.">
        <title>Primary structure of the neuronal clathrin-associated protein auxilin and its expression in bacteria.</title>
        <authorList>
            <person name="Schroeder S."/>
            <person name="Morris S.A."/>
            <person name="Knorr R."/>
            <person name="Plessmann U."/>
            <person name="Weber K."/>
            <person name="Vinh N.G."/>
            <person name="Ungewickell E."/>
        </authorList>
    </citation>
    <scope>NUCLEOTIDE SEQUENCE [MRNA]</scope>
    <scope>PARTIAL PROTEIN SEQUENCE</scope>
    <scope>FUNCTION</scope>
    <scope>TISSUE SPECIFICITY</scope>
    <scope>SUBUNIT</scope>
    <source>
        <tissue>Brain</tissue>
    </source>
</reference>
<reference key="2">
    <citation type="journal article" date="1995" name="Nature">
        <title>Role of auxilin in uncoating clathrin-coated vesicles.</title>
        <authorList>
            <person name="Ungewickell E."/>
            <person name="Ungewickell H."/>
            <person name="Holstein S.E."/>
            <person name="Lindner R."/>
            <person name="Prasad K."/>
            <person name="Barouch W."/>
            <person name="Martin B."/>
            <person name="Greene L.E."/>
            <person name="Eisenberg E."/>
        </authorList>
    </citation>
    <scope>FUNCTION</scope>
    <scope>DOMAIN</scope>
    <scope>INTERACTION WITH CLTC AND HSPA8</scope>
</reference>
<reference key="3">
    <citation type="journal article" date="2001" name="J. Biol. Chem.">
        <title>Multiple interactions of auxilin 1 with clathrin and the AP-2 adaptor complex.</title>
        <authorList>
            <person name="Scheele U."/>
            <person name="Kalthoff C."/>
            <person name="Ungewickell E."/>
        </authorList>
    </citation>
    <scope>FUNCTION</scope>
    <scope>INTERACTION WITH CLTC AND AP2A2</scope>
</reference>
<reference key="4">
    <citation type="journal article" date="2003" name="Dev. Cell">
        <title>Auxilin-dynamin interactions link the uncoating ATPase chaperone machinery with vesicle formation.</title>
        <authorList>
            <person name="Newmyer S.L."/>
            <person name="Christensen A."/>
            <person name="Sever S."/>
        </authorList>
    </citation>
    <scope>FUNCTION</scope>
    <scope>INTERACTION WITH DNM1</scope>
</reference>
<reference key="5">
    <citation type="journal article" date="2011" name="Proc. Natl. Acad. Sci. U.S.A.">
        <title>A sequential mechanism for clathrin cage disassembly by 70-kDa heat-shock cognate protein (Hsc70) and auxilin.</title>
        <authorList>
            <person name="Rothnie A."/>
            <person name="Clarke A.R."/>
            <person name="Kuzmic P."/>
            <person name="Cameron A."/>
            <person name="Smith C.J."/>
        </authorList>
    </citation>
    <scope>FUNCTION</scope>
</reference>
<reference key="6">
    <citation type="journal article" date="2020" name="J. Cell Biol.">
        <title>Dynamics of Auxilin 1 and GAK in clathrin-mediated traffic.</title>
        <authorList>
            <person name="He K."/>
            <person name="Song E."/>
            <person name="Upadhyayula S."/>
            <person name="Dang S."/>
            <person name="Gaudin R."/>
            <person name="Skillern W."/>
            <person name="Bu K."/>
            <person name="Capraro B.R."/>
            <person name="Rapoport I."/>
            <person name="Kusters I."/>
            <person name="Ma M."/>
            <person name="Kirchhausen T."/>
        </authorList>
    </citation>
    <scope>SUBCELLULAR LOCATION</scope>
</reference>
<reference evidence="22" key="7">
    <citation type="journal article" date="2003" name="Biochemistry">
        <title>Structure-function analysis of the auxilin J-domain reveals an extended Hsc70 interaction interface.</title>
        <authorList>
            <person name="Jiang J."/>
            <person name="Taylor A.B."/>
            <person name="Prasad K."/>
            <person name="Ishikawa-Brush Y."/>
            <person name="Hart P.J."/>
            <person name="Lafer E.M."/>
            <person name="Sousa R."/>
        </authorList>
    </citation>
    <scope>X-RAY CRYSTALLOGRAPHY (2.5 ANGSTROMS) OF 810-910</scope>
    <scope>MUTAGENESIS OF LYS-847; LYS-849 AND ASP-876</scope>
    <scope>INTERACTION WITH HSPA8</scope>
    <scope>DOMAIN</scope>
</reference>
<reference evidence="21" key="8">
    <citation type="journal article" date="2004" name="Biochemistry">
        <title>Structure of the functional fragment of auxilin required for catalytic uncoating of clathrin-coated vesicles.</title>
        <authorList>
            <person name="Gruschus J.M."/>
            <person name="Han C.J."/>
            <person name="Greener T."/>
            <person name="Ferretti J.A."/>
            <person name="Greene L.E."/>
            <person name="Eisenberg E."/>
        </authorList>
    </citation>
    <scope>STRUCTURE BY NMR OF 737-910</scope>
    <scope>FUNCTION</scope>
    <scope>SUBUNIT</scope>
</reference>
<reference evidence="23" key="9">
    <citation type="journal article" date="2004" name="Nature">
        <title>Structure of an auxilin-bound clathrin coat and its implications for the mechanism of uncoating.</title>
        <authorList>
            <person name="Fotin A."/>
            <person name="Cheng Y."/>
            <person name="Grigorieff N."/>
            <person name="Walz T."/>
            <person name="Harrison S.C."/>
            <person name="Kirchhausen T."/>
        </authorList>
    </citation>
    <scope>STRUCTURE BY ELECTRON MICROSCOPY (12.0 ANGSTROMS) OF 797-910 IN COMPLEX WITH CLTC</scope>
    <scope>FUNCTION</scope>
</reference>
<reference evidence="24 25 26 27 28" key="10">
    <citation type="journal article" date="2007" name="Mol. Cell">
        <title>Structural basis of J cochaperone binding and regulation of Hsp70.</title>
        <authorList>
            <person name="Jiang J."/>
            <person name="Maes E.G."/>
            <person name="Taylor A.B."/>
            <person name="Wang L."/>
            <person name="Hinck A.P."/>
            <person name="Lafer E.M."/>
            <person name="Sousa R."/>
        </authorList>
    </citation>
    <scope>X-RAY CRYSTALLOGRAPHY (1.70 ANGSTROMS) OF 813-904 IN COMPLEX WITH HSPA8</scope>
    <scope>SUBUNIT</scope>
    <scope>FUNCTION</scope>
</reference>
<reference evidence="29" key="11">
    <citation type="journal article" date="2010" name="Structure">
        <title>Structure of the PTEN-like region of auxilin, a detector of clathrin-coated vesicle budding.</title>
        <authorList>
            <person name="Guan R."/>
            <person name="Dai H."/>
            <person name="Harrison S.C."/>
            <person name="Kirchhausen T."/>
        </authorList>
    </citation>
    <scope>X-RAY CRYSTALLOGRAPHY (2.20 ANGSTROMS) OF 40-400</scope>
    <scope>SUBCELLULAR LOCATION</scope>
    <scope>MUTAGENESIS OF ARG-301; ARG-307 AND LYS-311</scope>
</reference>
<feature type="chain" id="PRO_0000215902" description="Auxilin">
    <location>
        <begin position="1"/>
        <end position="910"/>
    </location>
</feature>
<feature type="repeat" description="1">
    <location>
        <begin position="33"/>
        <end position="36"/>
    </location>
</feature>
<feature type="repeat" description="2">
    <location>
        <begin position="37"/>
        <end position="40"/>
    </location>
</feature>
<feature type="repeat" description="3">
    <location>
        <begin position="41"/>
        <end position="44"/>
    </location>
</feature>
<feature type="domain" description="Phosphatase tensin-type" evidence="6">
    <location>
        <begin position="52"/>
        <end position="219"/>
    </location>
</feature>
<feature type="domain" description="C2 tensin-type" evidence="5">
    <location>
        <begin position="225"/>
        <end position="363"/>
    </location>
</feature>
<feature type="domain" description="J" evidence="4">
    <location>
        <begin position="846"/>
        <end position="910"/>
    </location>
</feature>
<feature type="region of interest" description="3 X 4 AA approximate tandem repeats">
    <location>
        <begin position="33"/>
        <end position="44"/>
    </location>
</feature>
<feature type="region of interest" description="Disordered" evidence="7">
    <location>
        <begin position="448"/>
        <end position="772"/>
    </location>
</feature>
<feature type="short sequence motif" description="SH3-binding" evidence="3">
    <location>
        <begin position="406"/>
        <end position="414"/>
    </location>
</feature>
<feature type="compositionally biased region" description="Low complexity" evidence="7">
    <location>
        <begin position="547"/>
        <end position="569"/>
    </location>
</feature>
<feature type="compositionally biased region" description="Polar residues" evidence="7">
    <location>
        <begin position="596"/>
        <end position="626"/>
    </location>
</feature>
<feature type="compositionally biased region" description="Low complexity" evidence="7">
    <location>
        <begin position="651"/>
        <end position="666"/>
    </location>
</feature>
<feature type="compositionally biased region" description="Gly residues" evidence="7">
    <location>
        <begin position="715"/>
        <end position="725"/>
    </location>
</feature>
<feature type="compositionally biased region" description="Polar residues" evidence="7">
    <location>
        <begin position="732"/>
        <end position="758"/>
    </location>
</feature>
<feature type="active site" description="Phosphocysteine intermediate" evidence="6">
    <location>
        <position position="161"/>
    </location>
</feature>
<feature type="modified residue" description="Phosphoserine" evidence="1">
    <location>
        <position position="109"/>
    </location>
</feature>
<feature type="modified residue" description="Phosphoserine" evidence="2">
    <location>
        <position position="450"/>
    </location>
</feature>
<feature type="modified residue" description="Phosphoserine" evidence="2">
    <location>
        <position position="453"/>
    </location>
</feature>
<feature type="modified residue" description="Phosphoserine" evidence="1">
    <location>
        <position position="560"/>
    </location>
</feature>
<feature type="modified residue" description="Phosphoserine" evidence="1">
    <location>
        <position position="567"/>
    </location>
</feature>
<feature type="mutagenesis site" description="Impairs recruitment to the coated pits; when associaited with E-307 and E-311." evidence="14">
    <original>R</original>
    <variation>E</variation>
    <location>
        <position position="301"/>
    </location>
</feature>
<feature type="mutagenesis site" description="Impairs recruitment to the coated pits; when associaited with E-301 and E-311." evidence="14">
    <original>R</original>
    <variation>E</variation>
    <location>
        <position position="307"/>
    </location>
</feature>
<feature type="mutagenesis site" description="Impairs recruitment to the coated pits; when associaited with E-301 and E-307." evidence="14">
    <original>K</original>
    <variation>E</variation>
    <location>
        <position position="311"/>
    </location>
</feature>
<feature type="mutagenesis site" description="Strongly reduces interaction with HSPA8." evidence="9">
    <original>K</original>
    <variation>C</variation>
    <location>
        <position position="847"/>
    </location>
</feature>
<feature type="mutagenesis site" description="Slightly reduces interaction with HSPA8." evidence="9">
    <original>K</original>
    <variation>C</variation>
    <location>
        <position position="849"/>
    </location>
</feature>
<feature type="mutagenesis site" description="Loss of interaction with HSPA8." evidence="9">
    <original>D</original>
    <variation>A</variation>
    <location>
        <position position="876"/>
    </location>
</feature>
<feature type="strand" evidence="32">
    <location>
        <begin position="54"/>
        <end position="60"/>
    </location>
</feature>
<feature type="strand" evidence="32">
    <location>
        <begin position="62"/>
        <end position="74"/>
    </location>
</feature>
<feature type="helix" evidence="32">
    <location>
        <begin position="89"/>
        <end position="99"/>
    </location>
</feature>
<feature type="strand" evidence="32">
    <location>
        <begin position="103"/>
        <end position="107"/>
    </location>
</feature>
<feature type="strand" evidence="32">
    <location>
        <begin position="109"/>
        <end position="111"/>
    </location>
</feature>
<feature type="helix" evidence="32">
    <location>
        <begin position="114"/>
        <end position="116"/>
    </location>
</feature>
<feature type="helix" evidence="32">
    <location>
        <begin position="119"/>
        <end position="121"/>
    </location>
</feature>
<feature type="strand" evidence="32">
    <location>
        <begin position="122"/>
        <end position="124"/>
    </location>
</feature>
<feature type="strand" evidence="32">
    <location>
        <begin position="129"/>
        <end position="131"/>
    </location>
</feature>
<feature type="helix" evidence="32">
    <location>
        <begin position="135"/>
        <end position="151"/>
    </location>
</feature>
<feature type="strand" evidence="32">
    <location>
        <begin position="156"/>
        <end position="161"/>
    </location>
</feature>
<feature type="helix" evidence="32">
    <location>
        <begin position="166"/>
        <end position="178"/>
    </location>
</feature>
<feature type="helix" evidence="32">
    <location>
        <begin position="185"/>
        <end position="195"/>
    </location>
</feature>
<feature type="helix" evidence="32">
    <location>
        <begin position="203"/>
        <end position="216"/>
    </location>
</feature>
<feature type="strand" evidence="32">
    <location>
        <begin position="217"/>
        <end position="219"/>
    </location>
</feature>
<feature type="strand" evidence="32">
    <location>
        <begin position="228"/>
        <end position="237"/>
    </location>
</feature>
<feature type="strand" evidence="32">
    <location>
        <begin position="245"/>
        <end position="248"/>
    </location>
</feature>
<feature type="strand" evidence="32">
    <location>
        <begin position="250"/>
        <end position="256"/>
    </location>
</feature>
<feature type="strand" evidence="32">
    <location>
        <begin position="259"/>
        <end position="263"/>
    </location>
</feature>
<feature type="helix" evidence="32">
    <location>
        <begin position="268"/>
        <end position="270"/>
    </location>
</feature>
<feature type="helix" evidence="32">
    <location>
        <begin position="276"/>
        <end position="278"/>
    </location>
</feature>
<feature type="strand" evidence="32">
    <location>
        <begin position="281"/>
        <end position="289"/>
    </location>
</feature>
<feature type="strand" evidence="32">
    <location>
        <begin position="291"/>
        <end position="304"/>
    </location>
</feature>
<feature type="strand" evidence="32">
    <location>
        <begin position="310"/>
        <end position="323"/>
    </location>
</feature>
<feature type="helix" evidence="32">
    <location>
        <begin position="324"/>
        <end position="326"/>
    </location>
</feature>
<feature type="strand" evidence="32">
    <location>
        <begin position="333"/>
        <end position="337"/>
    </location>
</feature>
<feature type="helix" evidence="32">
    <location>
        <begin position="338"/>
        <end position="340"/>
    </location>
</feature>
<feature type="helix" evidence="32">
    <location>
        <begin position="347"/>
        <end position="349"/>
    </location>
</feature>
<feature type="strand" evidence="32">
    <location>
        <begin position="355"/>
        <end position="362"/>
    </location>
</feature>
<feature type="helix" evidence="32">
    <location>
        <begin position="374"/>
        <end position="377"/>
    </location>
</feature>
<feature type="helix" evidence="32">
    <location>
        <begin position="385"/>
        <end position="388"/>
    </location>
</feature>
<feature type="helix" evidence="32">
    <location>
        <begin position="392"/>
        <end position="398"/>
    </location>
</feature>
<feature type="strand" evidence="30">
    <location>
        <begin position="738"/>
        <end position="740"/>
    </location>
</feature>
<feature type="strand" evidence="30">
    <location>
        <begin position="751"/>
        <end position="754"/>
    </location>
</feature>
<feature type="strand" evidence="30">
    <location>
        <begin position="757"/>
        <end position="759"/>
    </location>
</feature>
<feature type="helix" evidence="30">
    <location>
        <begin position="781"/>
        <end position="783"/>
    </location>
</feature>
<feature type="strand" evidence="30">
    <location>
        <begin position="786"/>
        <end position="789"/>
    </location>
</feature>
<feature type="helix" evidence="30">
    <location>
        <begin position="801"/>
        <end position="809"/>
    </location>
</feature>
<feature type="helix" evidence="31">
    <location>
        <begin position="814"/>
        <end position="826"/>
    </location>
</feature>
<feature type="helix" evidence="31">
    <location>
        <begin position="830"/>
        <end position="836"/>
    </location>
</feature>
<feature type="helix" evidence="31">
    <location>
        <begin position="837"/>
        <end position="839"/>
    </location>
</feature>
<feature type="helix" evidence="31">
    <location>
        <begin position="853"/>
        <end position="855"/>
    </location>
</feature>
<feature type="strand" evidence="31">
    <location>
        <begin position="856"/>
        <end position="858"/>
    </location>
</feature>
<feature type="helix" evidence="31">
    <location>
        <begin position="859"/>
        <end position="872"/>
    </location>
</feature>
<feature type="helix" evidence="31">
    <location>
        <begin position="875"/>
        <end position="878"/>
    </location>
</feature>
<feature type="helix" evidence="31">
    <location>
        <begin position="884"/>
        <end position="903"/>
    </location>
</feature>
<name>AUXI_BOVIN</name>
<protein>
    <recommendedName>
        <fullName evidence="19">Auxilin</fullName>
        <ecNumber evidence="20">3.1.3.-</ecNumber>
    </recommendedName>
    <alternativeName>
        <fullName evidence="1">DnaJ homolog subfamily C member 6</fullName>
    </alternativeName>
</protein>
<comment type="function">
    <text evidence="8 10 11 12 13 15 17 18 20">May act as a protein phosphatase and/or a lipid phosphatase (Probable). Co-chaperone that recruits HSPA8/HSC70 to clathrin-coated vesicles (CCVs) and promotes the ATP-dependent dissociation of clathrin from CCVs and participates in clathrin-mediated endocytosis of synaptic vesicles and their recycling and also in intracellular trafficking (PubMed:11470803, PubMed:8524399). Firstly, binds tightly to the clathrin cages, at a ratio of one DNAJC6 per clathrin triskelion (PubMed:15023062, PubMed:15502813, PubMed:21482805, PubMed:7705342, PubMed:8524399). The HSPA8:ATP complex then binds to the clathrin-auxilin cage, initially at a ratio of one HSPA8 per triskelion leading to ATP hydrolysis stimulation and causing a conformational change in the HSPA8 (PubMed:15023062, PubMed:17996706, PubMed:21482805, PubMed:8524399). This cycle is repeated three times to drive to a complex containing the clathrin-auxilin cage associated to three HSPA8:ADP complex (PubMed:21482805). The ATP hydrolysis of the third HSPA8:ATP complex leads to a concerted dismantling of the cage into component triskelia (PubMed:21482805). Then, dissociates from the released triskelia and be recycled to initiate another cycle of HSPA8's recruitment (PubMed:21482805, PubMed:8524399). Also acts during the early steps of clathrin-coated vesicle (CCV) formation through its interaction with the GTP bound form of DNM1 (PubMed:12791276).</text>
</comment>
<comment type="subunit">
    <text evidence="8 9 10 11 12 13 17 18">Forms a complex composed of HSPA8, CLTC and DNAJC6 (PubMed:8524399). Interacts with HSPA8/HSC70 in an ATP-dependent manner; this interaction stimulates the HSPA8's ATPase activity (PubMed:12741832, PubMed:17996706). Interacts with CLTC; this interaction produces a local change in heavy-chain contacts, creating a detectable global distortion of the clathrin coat (PubMed:11470803, PubMed:15023062, PubMed:15502813, PubMed:7705342). Interacts with AP2A2 (PubMed:11470803). Interacts with DNM1(GTP-bound form); this interaction allows clathrin-coated vesicle (CCV) formation at the plasma membrane (PubMed:12791276).</text>
</comment>
<comment type="subcellular location">
    <subcellularLocation>
        <location evidence="14 16">Cytoplasmic vesicle</location>
        <location evidence="14 16">Clathrin-coated vesicle</location>
    </subcellularLocation>
    <text evidence="16">Appears on coated vesicles in successive transient bursts, immediately after the vesicle release from the plasma membrane (PubMed:31962345). Recruitment to clathrin-coated vesicles depends on temporal variations in phosphoinositide composition of clathrin-coated vesicles (PubMed:31962345).</text>
</comment>
<comment type="tissue specificity">
    <text evidence="17">Brain.</text>
</comment>
<comment type="domain">
    <text evidence="9 18">The J domain mediates interaction with HSPA8/HSC70 (PubMed:12741832) and is required for basket dissociation (PubMed:8524399).</text>
</comment>
<comment type="PTM">
    <text evidence="17">The N-terminus is blocked.</text>
</comment>
<comment type="PTM">
    <text evidence="1">Phosphorylation at Ser-567 modulates its ability to bind CLTC and therefore the synaptic vesicle endocytosis (SVE).</text>
</comment>
<sequence length="910" mass="99512">MDSSGASSPDMEPSYGGGLFDMVKGGAGRLFSNLKDNLKDTLKDTSSRVIQSVTSYTKGDLDFTYVTSRIIVMSFPLDSVDIGFRNQVDDIRSFLDSRHLDHYTVYNLSPKSYRTAKFHSRVSECSWPIRQAPSLHNLFAVCRNMYNWLLQNPKNVCVVHCLDGRAASSILVGAMFIFCNLYSTPGPAVRLLYAKRPGIGLSPSHRRYLGYMCDLLADKPYRPHFKPLTIKSITVSPVPFFNKQRNGCRPYCDVLIGETKIYTTCADFERMKEYRVQDGKIFIPLSITVQGDVVVSMYHLRSTIGSRLQAKVTNTQIFQLQFHTGFIPLDTTVLKFTKPELDACDVPEKYPQLFQVTLDVELQPHDKVMELTPPWEHYCTKDVNPSILFSSHQEHQDTLVLGGQAPIDIPPDNPRHFGQGGFFSTLCWQDQKSEKSFCEEDHAALVNQESEQSDDELLTLSSPHGNANGDKPHAARKPSKKQQEPAAPAPPEDVDLLGLEGSAVSKNFSSPAAPPSNSELLSDLFGGGGAAGPVQSGQSGVDDVFHPSGPTSTQSTPRRSATSTSASPTLRVGEGATFDPFGAPSKPSGQDLLGSFLNTASASSDPFLQPTRSPSPTVHASSTPAVNIQPDVSGAWDWHTKPGGFGMGSKSAATSPTGSSHGTPTHQNKPQTLDPFADLGTLGGSSFASKPSTPTGLGGGFPPLSSPQKASPQPMGGGWQQGGGYNWQQTQSKPQSSMPHSSPQNRPNYNVSFSSMPGGQNERGKAAANLEGKQKAADFEDLLSGQGFNAHKDKKGPRTIAEMRKEEMAKEMDPEKLKILEWIEGKERNIRALLSTMHTVLWAGETKWKPVGMADLVTPEQVKKVYRKAVLVVHPDKATGQPYEQYAKMIFMELNDAWSEFENQGQKPLY</sequence>